<evidence type="ECO:0000250" key="1">
    <source>
        <dbReference type="UniProtKB" id="O59080"/>
    </source>
</evidence>
<evidence type="ECO:0000250" key="2">
    <source>
        <dbReference type="UniProtKB" id="Q03148"/>
    </source>
</evidence>
<evidence type="ECO:0000269" key="3">
    <source>
    </source>
</evidence>
<evidence type="ECO:0000305" key="4"/>
<comment type="function">
    <text evidence="2">Catalyzes the formation of pyridoxal 5'-phosphate from ribose 5-phosphate (RBP), glyceraldehyde 3-phosphate (G3P) and ammonia. The ammonia is provided by PDX2. Can also use ribulose 5-phosphate and dihydroxyacetone phosphate as substrates, resulting from enzyme-catalyzed isomerization of RBP and G3P, respectively. Also plays an indirect role in resistance to singlet oxygen-generating photosensitizers.</text>
</comment>
<comment type="catalytic activity">
    <reaction evidence="2">
        <text>aldehydo-D-ribose 5-phosphate + D-glyceraldehyde 3-phosphate + L-glutamine = pyridoxal 5'-phosphate + L-glutamate + phosphate + 3 H2O + H(+)</text>
        <dbReference type="Rhea" id="RHEA:31507"/>
        <dbReference type="ChEBI" id="CHEBI:15377"/>
        <dbReference type="ChEBI" id="CHEBI:15378"/>
        <dbReference type="ChEBI" id="CHEBI:29985"/>
        <dbReference type="ChEBI" id="CHEBI:43474"/>
        <dbReference type="ChEBI" id="CHEBI:58273"/>
        <dbReference type="ChEBI" id="CHEBI:58359"/>
        <dbReference type="ChEBI" id="CHEBI:59776"/>
        <dbReference type="ChEBI" id="CHEBI:597326"/>
        <dbReference type="EC" id="4.3.3.6"/>
    </reaction>
</comment>
<comment type="pathway">
    <text>Cofactor biosynthesis; pyridoxal 5'-phosphate biosynthesis.</text>
</comment>
<comment type="induction">
    <text evidence="3">By ethylene, a major product of degradation of oceanic dissolved organic carbon by photochemical reactions initiated by sunlight.</text>
</comment>
<comment type="similarity">
    <text evidence="4">Belongs to the PdxS/SNZ family.</text>
</comment>
<proteinExistence type="evidence at transcript level"/>
<dbReference type="EC" id="4.3.3.6"/>
<dbReference type="EMBL" id="Y18971">
    <property type="protein sequence ID" value="CAC80278.1"/>
    <property type="molecule type" value="mRNA"/>
</dbReference>
<dbReference type="EMBL" id="Y19159">
    <property type="protein sequence ID" value="CAB59635.1"/>
    <property type="molecule type" value="mRNA"/>
</dbReference>
<dbReference type="EMBL" id="AJ277952">
    <property type="protein sequence ID" value="CAC81977.1"/>
    <property type="molecule type" value="Genomic_DNA"/>
</dbReference>
<dbReference type="SMR" id="Q8WPW2"/>
<dbReference type="UniPathway" id="UPA00245"/>
<dbReference type="GO" id="GO:0036381">
    <property type="term" value="F:pyridoxal 5'-phosphate synthase (glutamine hydrolysing) activity"/>
    <property type="evidence" value="ECO:0007669"/>
    <property type="project" value="UniProtKB-EC"/>
</dbReference>
<dbReference type="GO" id="GO:0006520">
    <property type="term" value="P:amino acid metabolic process"/>
    <property type="evidence" value="ECO:0007669"/>
    <property type="project" value="TreeGrafter"/>
</dbReference>
<dbReference type="GO" id="GO:0042823">
    <property type="term" value="P:pyridoxal phosphate biosynthetic process"/>
    <property type="evidence" value="ECO:0007669"/>
    <property type="project" value="UniProtKB-UniPathway"/>
</dbReference>
<dbReference type="GO" id="GO:0008615">
    <property type="term" value="P:pyridoxine biosynthetic process"/>
    <property type="evidence" value="ECO:0007669"/>
    <property type="project" value="TreeGrafter"/>
</dbReference>
<dbReference type="CDD" id="cd04727">
    <property type="entry name" value="pdxS"/>
    <property type="match status" value="1"/>
</dbReference>
<dbReference type="FunFam" id="3.20.20.70:FF:000001">
    <property type="entry name" value="Pyridoxine biosynthesis protein PDX1"/>
    <property type="match status" value="1"/>
</dbReference>
<dbReference type="Gene3D" id="3.20.20.70">
    <property type="entry name" value="Aldolase class I"/>
    <property type="match status" value="1"/>
</dbReference>
<dbReference type="HAMAP" id="MF_01824">
    <property type="entry name" value="PdxS"/>
    <property type="match status" value="1"/>
</dbReference>
<dbReference type="InterPro" id="IPR013785">
    <property type="entry name" value="Aldolase_TIM"/>
</dbReference>
<dbReference type="InterPro" id="IPR001852">
    <property type="entry name" value="PdxS/SNZ"/>
</dbReference>
<dbReference type="InterPro" id="IPR033755">
    <property type="entry name" value="PdxS/SNZ_N"/>
</dbReference>
<dbReference type="InterPro" id="IPR011060">
    <property type="entry name" value="RibuloseP-bd_barrel"/>
</dbReference>
<dbReference type="NCBIfam" id="NF003215">
    <property type="entry name" value="PRK04180.1"/>
    <property type="match status" value="1"/>
</dbReference>
<dbReference type="NCBIfam" id="TIGR00343">
    <property type="entry name" value="pyridoxal 5'-phosphate synthase lyase subunit PdxS"/>
    <property type="match status" value="1"/>
</dbReference>
<dbReference type="PANTHER" id="PTHR31829">
    <property type="entry name" value="PYRIDOXAL 5'-PHOSPHATE SYNTHASE SUBUNIT SNZ1-RELATED"/>
    <property type="match status" value="1"/>
</dbReference>
<dbReference type="PANTHER" id="PTHR31829:SF0">
    <property type="entry name" value="PYRIDOXAL 5'-PHOSPHATE SYNTHASE SUBUNIT SNZ1-RELATED"/>
    <property type="match status" value="1"/>
</dbReference>
<dbReference type="Pfam" id="PF01680">
    <property type="entry name" value="SOR_SNZ"/>
    <property type="match status" value="1"/>
</dbReference>
<dbReference type="PIRSF" id="PIRSF029271">
    <property type="entry name" value="Pdx1"/>
    <property type="match status" value="1"/>
</dbReference>
<dbReference type="SUPFAM" id="SSF51366">
    <property type="entry name" value="Ribulose-phoshate binding barrel"/>
    <property type="match status" value="1"/>
</dbReference>
<dbReference type="PROSITE" id="PS01235">
    <property type="entry name" value="PDXS_SNZ_1"/>
    <property type="match status" value="1"/>
</dbReference>
<dbReference type="PROSITE" id="PS51129">
    <property type="entry name" value="PDXS_SNZ_2"/>
    <property type="match status" value="1"/>
</dbReference>
<sequence>MSEPKTSATSETQTGTMTVKTGLAQMLKGGIIMDVINADQARVAEEAGACAVMALEKVPADIRKDGGVARMADPRKIKEIMDTVTVPVMAKCRIGHFAEAQILQNLGVDFIDESEVLSPADDENHVDKQPFNVPFVCGARSLGEALRRISEGAAMIRTKGEAGTGNVVEAVRHARQINREIRVAQCLSSAELYGYAKQLGVPLDLLQKTAKLGRLPVVNFAAGGLATPADVSLLMQLGVDGVFVGSGIFKSGNPEKRAKAMVQAVTHYNDPKVLADVSEDLGDPMVGLNCEHLSEKWAQRESVHKS</sequence>
<reference key="1">
    <citation type="journal article" date="1999" name="J. Biol. Chem.">
        <title>Ethylene modulates gene expression in cells of the marine sponge Suberites domuncula and reduces the degree of apoptosis.</title>
        <authorList>
            <person name="Krasko A."/>
            <person name="Schroeder H.C."/>
            <person name="Perovic S."/>
            <person name="Steffen R."/>
            <person name="Kruse M."/>
            <person name="Reichert W."/>
            <person name="Mueller I.M."/>
            <person name="Mueller W.E.G."/>
        </authorList>
    </citation>
    <scope>NUCLEOTIDE SEQUENCE [MRNA]</scope>
    <scope>INDUCTION</scope>
</reference>
<reference key="2">
    <citation type="journal article" date="2001" name="Biochim. Biophys. Acta">
        <title>Identification of highly conserved genes: SNZ and SNO in the marine sponge Suberites domuncula: their gene structure and promoter activity in mammalian cells.</title>
        <authorList>
            <person name="Seack J."/>
            <person name="Perovic S."/>
            <person name="Gamulin V."/>
            <person name="Schroeder H.C."/>
            <person name="Beutelmann P."/>
            <person name="Mueller I.M."/>
            <person name="Mueller W.E.G."/>
        </authorList>
    </citation>
    <scope>NUCLEOTIDE SEQUENCE [GENOMIC DNA]</scope>
</reference>
<name>PDX1_SUBDO</name>
<protein>
    <recommendedName>
        <fullName>Pyridoxal 5'-phosphate synthase subunit SNZERR</fullName>
        <shortName>PLP synthase subunit SNZERR</shortName>
        <ecNumber>4.3.3.6</ecNumber>
    </recommendedName>
    <alternativeName>
        <fullName>Ethylene response protein</fullName>
    </alternativeName>
    <alternativeName>
        <fullName>PDX1</fullName>
    </alternativeName>
</protein>
<gene>
    <name type="primary">SNZERR</name>
    <name type="synonym">ERR</name>
</gene>
<organism>
    <name type="scientific">Suberites domuncula</name>
    <name type="common">Sponge</name>
    <dbReference type="NCBI Taxonomy" id="55567"/>
    <lineage>
        <taxon>Eukaryota</taxon>
        <taxon>Metazoa</taxon>
        <taxon>Porifera</taxon>
        <taxon>Demospongiae</taxon>
        <taxon>Heteroscleromorpha</taxon>
        <taxon>Suberitida</taxon>
        <taxon>Suberitidae</taxon>
        <taxon>Suberites</taxon>
    </lineage>
</organism>
<keyword id="KW-0456">Lyase</keyword>
<keyword id="KW-0663">Pyridoxal phosphate</keyword>
<keyword id="KW-0704">Schiff base</keyword>
<accession>Q8WPW2</accession>
<accession>Q9U5K9</accession>
<feature type="chain" id="PRO_0000109365" description="Pyridoxal 5'-phosphate synthase subunit SNZERR">
    <location>
        <begin position="1"/>
        <end position="306"/>
    </location>
</feature>
<feature type="active site" description="Schiff-base intermediate with D-ribose 5-phosphate" evidence="1">
    <location>
        <position position="91"/>
    </location>
</feature>
<feature type="binding site" evidence="1">
    <location>
        <position position="34"/>
    </location>
    <ligand>
        <name>D-ribose 5-phosphate</name>
        <dbReference type="ChEBI" id="CHEBI:78346"/>
    </ligand>
</feature>
<feature type="binding site" evidence="1">
    <location>
        <position position="163"/>
    </location>
    <ligand>
        <name>D-ribose 5-phosphate</name>
        <dbReference type="ChEBI" id="CHEBI:78346"/>
    </ligand>
</feature>
<feature type="binding site" evidence="2">
    <location>
        <position position="175"/>
    </location>
    <ligand>
        <name>D-glyceraldehyde 3-phosphate</name>
        <dbReference type="ChEBI" id="CHEBI:59776"/>
    </ligand>
</feature>
<feature type="binding site" evidence="1">
    <location>
        <position position="224"/>
    </location>
    <ligand>
        <name>D-ribose 5-phosphate</name>
        <dbReference type="ChEBI" id="CHEBI:78346"/>
    </ligand>
</feature>
<feature type="binding site" evidence="1">
    <location>
        <begin position="245"/>
        <end position="246"/>
    </location>
    <ligand>
        <name>D-ribose 5-phosphate</name>
        <dbReference type="ChEBI" id="CHEBI:78346"/>
    </ligand>
</feature>
<feature type="sequence conflict" description="In Ref. 1; CAC81977." evidence="4" ref="1">
    <original>V</original>
    <variation>I</variation>
    <location>
        <position position="43"/>
    </location>
</feature>
<feature type="sequence conflict" description="In Ref. 1; CAC81977." evidence="4" ref="1">
    <original>S</original>
    <variation>T</variation>
    <location>
        <position position="141"/>
    </location>
</feature>
<feature type="sequence conflict" description="In Ref. 1; CAC81977." evidence="4" ref="1">
    <original>R</original>
    <variation>H</variation>
    <location>
        <position position="179"/>
    </location>
</feature>
<feature type="sequence conflict" description="In Ref. 1; CAC81977." evidence="4" ref="1">
    <original>L</original>
    <variation>M</variation>
    <location>
        <position position="187"/>
    </location>
</feature>